<feature type="chain" id="PRO_0000326924" description="Protoheme IX farnesyltransferase 2">
    <location>
        <begin position="1"/>
        <end position="295"/>
    </location>
</feature>
<feature type="transmembrane region" description="Helical" evidence="1">
    <location>
        <begin position="9"/>
        <end position="29"/>
    </location>
</feature>
<feature type="transmembrane region" description="Helical" evidence="1">
    <location>
        <begin position="36"/>
        <end position="56"/>
    </location>
</feature>
<feature type="transmembrane region" description="Helical" evidence="1">
    <location>
        <begin position="85"/>
        <end position="105"/>
    </location>
</feature>
<feature type="transmembrane region" description="Helical" evidence="1">
    <location>
        <begin position="108"/>
        <end position="128"/>
    </location>
</feature>
<feature type="transmembrane region" description="Helical" evidence="1">
    <location>
        <begin position="135"/>
        <end position="155"/>
    </location>
</feature>
<feature type="transmembrane region" description="Helical" evidence="1">
    <location>
        <begin position="163"/>
        <end position="183"/>
    </location>
</feature>
<feature type="transmembrane region" description="Helical" evidence="1">
    <location>
        <begin position="209"/>
        <end position="229"/>
    </location>
</feature>
<feature type="transmembrane region" description="Helical" evidence="1">
    <location>
        <begin position="230"/>
        <end position="250"/>
    </location>
</feature>
<feature type="transmembrane region" description="Helical" evidence="1">
    <location>
        <begin position="263"/>
        <end position="283"/>
    </location>
</feature>
<dbReference type="EC" id="2.5.1.141" evidence="1"/>
<dbReference type="EMBL" id="CP000076">
    <property type="protein sequence ID" value="AAY94261.1"/>
    <property type="molecule type" value="Genomic_DNA"/>
</dbReference>
<dbReference type="SMR" id="Q4K6M1"/>
<dbReference type="STRING" id="220664.PFL_5033"/>
<dbReference type="KEGG" id="pfl:PFL_5033"/>
<dbReference type="PATRIC" id="fig|220664.5.peg.5152"/>
<dbReference type="eggNOG" id="COG0109">
    <property type="taxonomic scope" value="Bacteria"/>
</dbReference>
<dbReference type="HOGENOM" id="CLU_029631_0_0_6"/>
<dbReference type="UniPathway" id="UPA00834">
    <property type="reaction ID" value="UER00712"/>
</dbReference>
<dbReference type="Proteomes" id="UP000008540">
    <property type="component" value="Chromosome"/>
</dbReference>
<dbReference type="GO" id="GO:0005886">
    <property type="term" value="C:plasma membrane"/>
    <property type="evidence" value="ECO:0007669"/>
    <property type="project" value="UniProtKB-SubCell"/>
</dbReference>
<dbReference type="GO" id="GO:0008495">
    <property type="term" value="F:protoheme IX farnesyltransferase activity"/>
    <property type="evidence" value="ECO:0007669"/>
    <property type="project" value="UniProtKB-UniRule"/>
</dbReference>
<dbReference type="GO" id="GO:0048034">
    <property type="term" value="P:heme O biosynthetic process"/>
    <property type="evidence" value="ECO:0007669"/>
    <property type="project" value="UniProtKB-UniRule"/>
</dbReference>
<dbReference type="CDD" id="cd13957">
    <property type="entry name" value="PT_UbiA_Cox10"/>
    <property type="match status" value="1"/>
</dbReference>
<dbReference type="FunFam" id="1.10.357.140:FF:000001">
    <property type="entry name" value="Protoheme IX farnesyltransferase"/>
    <property type="match status" value="1"/>
</dbReference>
<dbReference type="Gene3D" id="1.10.357.140">
    <property type="entry name" value="UbiA prenyltransferase"/>
    <property type="match status" value="1"/>
</dbReference>
<dbReference type="HAMAP" id="MF_00154">
    <property type="entry name" value="CyoE_CtaB"/>
    <property type="match status" value="1"/>
</dbReference>
<dbReference type="InterPro" id="IPR006369">
    <property type="entry name" value="Protohaem_IX_farnesylTrfase"/>
</dbReference>
<dbReference type="InterPro" id="IPR000537">
    <property type="entry name" value="UbiA_prenyltransferase"/>
</dbReference>
<dbReference type="InterPro" id="IPR030470">
    <property type="entry name" value="UbiA_prenylTrfase_CS"/>
</dbReference>
<dbReference type="InterPro" id="IPR044878">
    <property type="entry name" value="UbiA_sf"/>
</dbReference>
<dbReference type="NCBIfam" id="TIGR01473">
    <property type="entry name" value="cyoE_ctaB"/>
    <property type="match status" value="1"/>
</dbReference>
<dbReference type="NCBIfam" id="NF003348">
    <property type="entry name" value="PRK04375.1-1"/>
    <property type="match status" value="1"/>
</dbReference>
<dbReference type="PANTHER" id="PTHR43448">
    <property type="entry name" value="PROTOHEME IX FARNESYLTRANSFERASE, MITOCHONDRIAL"/>
    <property type="match status" value="1"/>
</dbReference>
<dbReference type="PANTHER" id="PTHR43448:SF2">
    <property type="entry name" value="PROTOHEME IX FARNESYLTRANSFERASE, MITOCHONDRIAL"/>
    <property type="match status" value="1"/>
</dbReference>
<dbReference type="Pfam" id="PF01040">
    <property type="entry name" value="UbiA"/>
    <property type="match status" value="1"/>
</dbReference>
<dbReference type="PROSITE" id="PS00943">
    <property type="entry name" value="UBIA"/>
    <property type="match status" value="1"/>
</dbReference>
<name>CYOE2_PSEF5</name>
<evidence type="ECO:0000255" key="1">
    <source>
        <dbReference type="HAMAP-Rule" id="MF_00154"/>
    </source>
</evidence>
<keyword id="KW-0997">Cell inner membrane</keyword>
<keyword id="KW-1003">Cell membrane</keyword>
<keyword id="KW-0350">Heme biosynthesis</keyword>
<keyword id="KW-0472">Membrane</keyword>
<keyword id="KW-0808">Transferase</keyword>
<keyword id="KW-0812">Transmembrane</keyword>
<keyword id="KW-1133">Transmembrane helix</keyword>
<gene>
    <name evidence="1" type="primary">cyoE2</name>
    <name type="ordered locus">PFL_5033</name>
</gene>
<organism>
    <name type="scientific">Pseudomonas fluorescens (strain ATCC BAA-477 / NRRL B-23932 / Pf-5)</name>
    <dbReference type="NCBI Taxonomy" id="220664"/>
    <lineage>
        <taxon>Bacteria</taxon>
        <taxon>Pseudomonadati</taxon>
        <taxon>Pseudomonadota</taxon>
        <taxon>Gammaproteobacteria</taxon>
        <taxon>Pseudomonadales</taxon>
        <taxon>Pseudomonadaceae</taxon>
        <taxon>Pseudomonas</taxon>
    </lineage>
</organism>
<protein>
    <recommendedName>
        <fullName evidence="1">Protoheme IX farnesyltransferase 2</fullName>
        <ecNumber evidence="1">2.5.1.141</ecNumber>
    </recommendedName>
    <alternativeName>
        <fullName evidence="1">Heme B farnesyltransferase 2</fullName>
    </alternativeName>
    <alternativeName>
        <fullName evidence="1">Heme O synthase 2</fullName>
    </alternativeName>
</protein>
<sequence>MSLKHFIQITKPGIIFGNVLSVAGGFFLASKGHVDLAIFLAAMIGTSLVVASGCVFNNCIDRDIDLKMERTKNRVLVQGLISLEVALVYASILGVAGVALLYYVANPLAALFAVIGFVIYVGFYSLYLKRKSVHGTLVGSLSGAMPPVIGYVAVSNSFDMAALTLLVMFSLWQMPHSYAIAIFRFNDYLAASIPVLPVKRGIRVAKKHILLYILAFLVATLMLTFSGYAGMSYLAVAAAMGMYWLYMAWTGYKAVDDTVWARKLFVFSIFTITALSVMMSVDFKAPTELLLTYAH</sequence>
<comment type="function">
    <text evidence="1">Converts heme B (protoheme IX) to heme O by substitution of the vinyl group on carbon 2 of heme B porphyrin ring with a hydroxyethyl farnesyl side group.</text>
</comment>
<comment type="catalytic activity">
    <reaction evidence="1">
        <text>heme b + (2E,6E)-farnesyl diphosphate + H2O = Fe(II)-heme o + diphosphate</text>
        <dbReference type="Rhea" id="RHEA:28070"/>
        <dbReference type="ChEBI" id="CHEBI:15377"/>
        <dbReference type="ChEBI" id="CHEBI:33019"/>
        <dbReference type="ChEBI" id="CHEBI:60344"/>
        <dbReference type="ChEBI" id="CHEBI:60530"/>
        <dbReference type="ChEBI" id="CHEBI:175763"/>
        <dbReference type="EC" id="2.5.1.141"/>
    </reaction>
</comment>
<comment type="pathway">
    <text evidence="1">Porphyrin-containing compound metabolism; heme O biosynthesis; heme O from protoheme: step 1/1.</text>
</comment>
<comment type="subcellular location">
    <subcellularLocation>
        <location evidence="1">Cell inner membrane</location>
        <topology evidence="1">Multi-pass membrane protein</topology>
    </subcellularLocation>
</comment>
<comment type="miscellaneous">
    <text evidence="1">Carbon 2 of the heme B porphyrin ring is defined according to the Fischer nomenclature.</text>
</comment>
<comment type="similarity">
    <text evidence="1">Belongs to the UbiA prenyltransferase family. Protoheme IX farnesyltransferase subfamily.</text>
</comment>
<accession>Q4K6M1</accession>
<reference key="1">
    <citation type="journal article" date="2005" name="Nat. Biotechnol.">
        <title>Complete genome sequence of the plant commensal Pseudomonas fluorescens Pf-5.</title>
        <authorList>
            <person name="Paulsen I.T."/>
            <person name="Press C.M."/>
            <person name="Ravel J."/>
            <person name="Kobayashi D.Y."/>
            <person name="Myers G.S.A."/>
            <person name="Mavrodi D.V."/>
            <person name="DeBoy R.T."/>
            <person name="Seshadri R."/>
            <person name="Ren Q."/>
            <person name="Madupu R."/>
            <person name="Dodson R.J."/>
            <person name="Durkin A.S."/>
            <person name="Brinkac L.M."/>
            <person name="Daugherty S.C."/>
            <person name="Sullivan S.A."/>
            <person name="Rosovitz M.J."/>
            <person name="Gwinn M.L."/>
            <person name="Zhou L."/>
            <person name="Schneider D.J."/>
            <person name="Cartinhour S.W."/>
            <person name="Nelson W.C."/>
            <person name="Weidman J."/>
            <person name="Watkins K."/>
            <person name="Tran K."/>
            <person name="Khouri H."/>
            <person name="Pierson E.A."/>
            <person name="Pierson L.S. III"/>
            <person name="Thomashow L.S."/>
            <person name="Loper J.E."/>
        </authorList>
    </citation>
    <scope>NUCLEOTIDE SEQUENCE [LARGE SCALE GENOMIC DNA]</scope>
    <source>
        <strain>ATCC BAA-477 / NRRL B-23932 / Pf-5</strain>
    </source>
</reference>
<proteinExistence type="inferred from homology"/>